<name>T2MU_MYCSP</name>
<proteinExistence type="evidence at protein level"/>
<accession>P43642</accession>
<protein>
    <recommendedName>
        <fullName evidence="2">Type II restriction enzyme MunI</fullName>
        <shortName evidence="3">R.MunI</shortName>
        <ecNumber>3.1.21.4</ecNumber>
    </recommendedName>
    <alternativeName>
        <fullName>Endonuclease MunI</fullName>
    </alternativeName>
    <alternativeName>
        <fullName>Type-2 restriction enzyme MunI</fullName>
    </alternativeName>
</protein>
<keyword id="KW-0002">3D-structure</keyword>
<keyword id="KW-0255">Endonuclease</keyword>
<keyword id="KW-0378">Hydrolase</keyword>
<keyword id="KW-0540">Nuclease</keyword>
<keyword id="KW-0680">Restriction system</keyword>
<evidence type="ECO:0000269" key="1">
    <source>
    </source>
</evidence>
<evidence type="ECO:0000303" key="2">
    <source>
    </source>
</evidence>
<evidence type="ECO:0000303" key="3">
    <source>
    </source>
</evidence>
<evidence type="ECO:0000305" key="4">
    <source>
    </source>
</evidence>
<evidence type="ECO:0007829" key="5">
    <source>
        <dbReference type="PDB" id="1D02"/>
    </source>
</evidence>
<comment type="function">
    <text evidence="2 4">A P subtype restriction enzyme that recognizes the double-stranded sequence 5'-CAATTG-3' and cleaves after C-1.</text>
</comment>
<comment type="catalytic activity">
    <reaction>
        <text>Endonucleolytic cleavage of DNA to give specific double-stranded fragments with terminal 5'-phosphates.</text>
        <dbReference type="EC" id="3.1.21.4"/>
    </reaction>
</comment>
<comment type="subunit">
    <text evidence="1">Homodimer.</text>
</comment>
<organism>
    <name type="scientific">Mycoplasma sp</name>
    <dbReference type="NCBI Taxonomy" id="2108"/>
    <lineage>
        <taxon>Bacteria</taxon>
        <taxon>Bacillati</taxon>
        <taxon>Mycoplasmatota</taxon>
        <taxon>Mollicutes</taxon>
        <taxon>Mycoplasmataceae</taxon>
        <taxon>Mycoplasma</taxon>
    </lineage>
</organism>
<sequence length="202" mass="23389">MGKSELSGRLNWQALAGLKASGAEQNLYNVFNAVFEGTKYVLYEKPKHLKNLYAQVVLPDDVIKEIFNPLIDLSTTQWGVSPDFAIENTETHKILFGEIKRQDGWVEGKDPSAGRGNAHERSCKLFTPGLLKAYRTIGGINDEEILPFWVVFEGDITRDPKRVREITFWYDHYQDNYFMWRPNESGEKLVQHFNEKLKKYLD</sequence>
<gene>
    <name evidence="3" type="primary">munIR</name>
</gene>
<feature type="chain" id="PRO_0000077341" description="Type II restriction enzyme MunI">
    <location>
        <begin position="1"/>
        <end position="202"/>
    </location>
</feature>
<feature type="helix" evidence="5">
    <location>
        <begin position="12"/>
        <end position="20"/>
    </location>
</feature>
<feature type="helix" evidence="5">
    <location>
        <begin position="27"/>
        <end position="34"/>
    </location>
</feature>
<feature type="turn" evidence="5">
    <location>
        <begin position="35"/>
        <end position="37"/>
    </location>
</feature>
<feature type="strand" evidence="5">
    <location>
        <begin position="38"/>
        <end position="45"/>
    </location>
</feature>
<feature type="strand" evidence="5">
    <location>
        <begin position="50"/>
        <end position="53"/>
    </location>
</feature>
<feature type="helix" evidence="5">
    <location>
        <begin position="60"/>
        <end position="65"/>
    </location>
</feature>
<feature type="helix" evidence="5">
    <location>
        <begin position="73"/>
        <end position="75"/>
    </location>
</feature>
<feature type="strand" evidence="5">
    <location>
        <begin position="83"/>
        <end position="88"/>
    </location>
</feature>
<feature type="turn" evidence="5">
    <location>
        <begin position="89"/>
        <end position="91"/>
    </location>
</feature>
<feature type="strand" evidence="5">
    <location>
        <begin position="94"/>
        <end position="101"/>
    </location>
</feature>
<feature type="helix" evidence="5">
    <location>
        <begin position="111"/>
        <end position="114"/>
    </location>
</feature>
<feature type="helix" evidence="5">
    <location>
        <begin position="118"/>
        <end position="126"/>
    </location>
</feature>
<feature type="helix" evidence="5">
    <location>
        <begin position="128"/>
        <end position="138"/>
    </location>
</feature>
<feature type="strand" evidence="5">
    <location>
        <begin position="147"/>
        <end position="154"/>
    </location>
</feature>
<feature type="helix" evidence="5">
    <location>
        <begin position="155"/>
        <end position="158"/>
    </location>
</feature>
<feature type="helix" evidence="5">
    <location>
        <begin position="160"/>
        <end position="170"/>
    </location>
</feature>
<feature type="strand" evidence="5">
    <location>
        <begin position="176"/>
        <end position="180"/>
    </location>
</feature>
<feature type="helix" evidence="5">
    <location>
        <begin position="186"/>
        <end position="196"/>
    </location>
</feature>
<feature type="helix" evidence="5">
    <location>
        <begin position="198"/>
        <end position="201"/>
    </location>
</feature>
<reference key="1">
    <citation type="journal article" date="1994" name="Gene">
        <title>CAATTG-specific restriction-modification munI genes from Mycoplasma: sequence similarities between R.MunI and R.EcoRI.</title>
        <authorList>
            <person name="Siksnys V."/>
            <person name="Zareckaja N."/>
            <person name="Vaisvila R."/>
            <person name="Timinskas A."/>
            <person name="Stakenas P."/>
            <person name="Butkus V."/>
            <person name="Janulaitis A."/>
        </authorList>
    </citation>
    <scope>NUCLEOTIDE SEQUENCE [GENOMIC DNA]</scope>
</reference>
<reference key="2">
    <citation type="journal article" date="2003" name="Nucleic Acids Res.">
        <title>A nomenclature for restriction enzymes, DNA methyltransferases, homing endonucleases and their genes.</title>
        <authorList>
            <person name="Roberts R.J."/>
            <person name="Belfort M."/>
            <person name="Bestor T."/>
            <person name="Bhagwat A.S."/>
            <person name="Bickle T.A."/>
            <person name="Bitinaite J."/>
            <person name="Blumenthal R.M."/>
            <person name="Degtyarev S.K."/>
            <person name="Dryden D.T."/>
            <person name="Dybvig K."/>
            <person name="Firman K."/>
            <person name="Gromova E.S."/>
            <person name="Gumport R.I."/>
            <person name="Halford S.E."/>
            <person name="Hattman S."/>
            <person name="Heitman J."/>
            <person name="Hornby D.P."/>
            <person name="Janulaitis A."/>
            <person name="Jeltsch A."/>
            <person name="Josephsen J."/>
            <person name="Kiss A."/>
            <person name="Klaenhammer T.R."/>
            <person name="Kobayashi I."/>
            <person name="Kong H."/>
            <person name="Krueger D.H."/>
            <person name="Lacks S."/>
            <person name="Marinus M.G."/>
            <person name="Miyahara M."/>
            <person name="Morgan R.D."/>
            <person name="Murray N.E."/>
            <person name="Nagaraja V."/>
            <person name="Piekarowicz A."/>
            <person name="Pingoud A."/>
            <person name="Raleigh E."/>
            <person name="Rao D.N."/>
            <person name="Reich N."/>
            <person name="Repin V.E."/>
            <person name="Selker E.U."/>
            <person name="Shaw P.C."/>
            <person name="Stein D.C."/>
            <person name="Stoddard B.L."/>
            <person name="Szybalski W."/>
            <person name="Trautner T.A."/>
            <person name="Van Etten J.L."/>
            <person name="Vitor J.M."/>
            <person name="Wilson G.G."/>
            <person name="Xu S.Y."/>
        </authorList>
    </citation>
    <scope>NOMENCLATURE</scope>
    <scope>SUBTYPE</scope>
</reference>
<reference key="3">
    <citation type="journal article" date="1999" name="EMBO J.">
        <title>Crystal structure of MunI restriction endonuclease in complex with cognate DNA at 1.7 A resolution.</title>
        <authorList>
            <person name="Deibert M."/>
            <person name="Grazulis S."/>
            <person name="Janulaitis A."/>
            <person name="Siksnys V."/>
            <person name="Huber R."/>
        </authorList>
    </citation>
    <scope>X-RAY CRYSTALLOGRAPHY (1.7 ANGSTROMS)</scope>
    <scope>FUNCTION</scope>
    <scope>SUBUNIT</scope>
</reference>
<dbReference type="EC" id="3.1.21.4"/>
<dbReference type="EMBL" id="X76192">
    <property type="protein sequence ID" value="CAA53788.1"/>
    <property type="molecule type" value="Genomic_DNA"/>
</dbReference>
<dbReference type="PIR" id="S38901">
    <property type="entry name" value="S38901"/>
</dbReference>
<dbReference type="PDB" id="1D02">
    <property type="method" value="X-ray"/>
    <property type="resolution" value="1.70 A"/>
    <property type="chains" value="A/B=1-202"/>
</dbReference>
<dbReference type="PDBsum" id="1D02"/>
<dbReference type="SMR" id="P43642"/>
<dbReference type="REBASE" id="1285">
    <property type="entry name" value="MunI"/>
</dbReference>
<dbReference type="EvolutionaryTrace" id="P43642"/>
<dbReference type="PRO" id="PR:P43642"/>
<dbReference type="GO" id="GO:0003677">
    <property type="term" value="F:DNA binding"/>
    <property type="evidence" value="ECO:0007669"/>
    <property type="project" value="InterPro"/>
</dbReference>
<dbReference type="GO" id="GO:0009036">
    <property type="term" value="F:type II site-specific deoxyribonuclease activity"/>
    <property type="evidence" value="ECO:0007669"/>
    <property type="project" value="UniProtKB-EC"/>
</dbReference>
<dbReference type="GO" id="GO:0009307">
    <property type="term" value="P:DNA restriction-modification system"/>
    <property type="evidence" value="ECO:0007669"/>
    <property type="project" value="UniProtKB-KW"/>
</dbReference>
<dbReference type="CDD" id="cd22336">
    <property type="entry name" value="MunI-like"/>
    <property type="match status" value="1"/>
</dbReference>
<dbReference type="Gene3D" id="3.40.580.10">
    <property type="entry name" value="Eco RI Endonuclease, subunit A"/>
    <property type="match status" value="1"/>
</dbReference>
<dbReference type="InterPro" id="IPR011335">
    <property type="entry name" value="Restrct_endonuc-II-like"/>
</dbReference>
<dbReference type="InterPro" id="IPR011336">
    <property type="entry name" value="Restrct_endonuc_II_EcoRI/MunI"/>
</dbReference>
<dbReference type="InterPro" id="IPR022725">
    <property type="entry name" value="Restrct_endonuc_II_MunI"/>
</dbReference>
<dbReference type="Pfam" id="PF11407">
    <property type="entry name" value="RestrictionMunI"/>
    <property type="match status" value="1"/>
</dbReference>
<dbReference type="SUPFAM" id="SSF52980">
    <property type="entry name" value="Restriction endonuclease-like"/>
    <property type="match status" value="1"/>
</dbReference>